<dbReference type="EMBL" id="AF014464">
    <property type="protein sequence ID" value="AAC26166.1"/>
    <property type="molecule type" value="mRNA"/>
</dbReference>
<dbReference type="PIR" id="S29214">
    <property type="entry name" value="S29214"/>
</dbReference>
<dbReference type="SMR" id="P29423"/>
<dbReference type="ArachnoServer" id="AS000234">
    <property type="toxin name" value="U2-ctenitoxin-Pn1a"/>
</dbReference>
<dbReference type="GO" id="GO:0005576">
    <property type="term" value="C:extracellular region"/>
    <property type="evidence" value="ECO:0007669"/>
    <property type="project" value="UniProtKB-SubCell"/>
</dbReference>
<dbReference type="GO" id="GO:0017080">
    <property type="term" value="F:sodium channel regulator activity"/>
    <property type="evidence" value="ECO:0007669"/>
    <property type="project" value="UniProtKB-KW"/>
</dbReference>
<dbReference type="GO" id="GO:0090729">
    <property type="term" value="F:toxin activity"/>
    <property type="evidence" value="ECO:0007669"/>
    <property type="project" value="UniProtKB-KW"/>
</dbReference>
<dbReference type="InterPro" id="IPR035285">
    <property type="entry name" value="CNTX"/>
</dbReference>
<dbReference type="Pfam" id="PF17492">
    <property type="entry name" value="D_CNTX"/>
    <property type="match status" value="1"/>
</dbReference>
<proteinExistence type="evidence at protein level"/>
<evidence type="ECO:0000250" key="1"/>
<evidence type="ECO:0000255" key="2"/>
<evidence type="ECO:0000269" key="3">
    <source>
    </source>
</evidence>
<evidence type="ECO:0000305" key="4"/>
<sequence length="88" mass="9841">MKVAILILSILVLAVASETIEEYRDDFAVEELERATCAGQDKPCKETCDCCGERGECVCALSYEGKYRCICRQGNFLIAWHKLASCKK</sequence>
<accession>P29423</accession>
<name>TX34A_PHONI</name>
<reference key="1">
    <citation type="journal article" date="1998" name="Toxicon">
        <title>Cloning of cDNAS encoding neurotoxic peptides from the spider Phoneutria nigriventer.</title>
        <authorList>
            <person name="Kalapothakis E."/>
            <person name="Penaforte C.L."/>
            <person name="Beirao P.S.L."/>
            <person name="Romano-Silva M.A."/>
            <person name="Cruz J.S."/>
            <person name="Prado M.A.M."/>
            <person name="Guimaraes P.E.M."/>
            <person name="Gomez M.V."/>
            <person name="Prado V.F."/>
        </authorList>
    </citation>
    <scope>NUCLEOTIDE SEQUENCE [MRNA]</scope>
    <source>
        <tissue>Venom gland</tissue>
    </source>
</reference>
<reference key="2">
    <citation type="journal article" date="1992" name="FEBS Lett.">
        <title>The purification and amino acid sequences of four Tx2 neurotoxins from the venom of the Brazilian 'armed' spider Phoneutria nigriventer (Keys).</title>
        <authorList>
            <person name="Cordeiro M.N."/>
            <person name="Diniz C.R."/>
            <person name="Valentim A.D.C."/>
            <person name="von Eickstedt V.R.D."/>
            <person name="Gilroy J."/>
            <person name="Richardson M."/>
        </authorList>
    </citation>
    <scope>PROTEIN SEQUENCE OF 35-87</scope>
    <source>
        <tissue>Venom</tissue>
    </source>
</reference>
<reference key="3">
    <citation type="journal article" date="2006" name="Comp. Biochem. Physiol.">
        <title>Comparison of the partial proteomes of the venoms of Brazilian spiders of the genus Phoneutria.</title>
        <authorList>
            <person name="Richardson M."/>
            <person name="Pimenta A.M."/>
            <person name="Bemquerer M.P."/>
            <person name="Santoro M.M."/>
            <person name="Beirao P.S."/>
            <person name="Lima M.E."/>
            <person name="Figueiredo S.G."/>
            <person name="Bloch C. Jr."/>
            <person name="Vasconcelos E.A."/>
            <person name="Campos F.A."/>
            <person name="Gomes P.C."/>
            <person name="Cordeiro M.N."/>
        </authorList>
    </citation>
    <scope>PROTEIN SEQUENCE OF 35-87</scope>
    <scope>SUBCELLULAR LOCATION</scope>
    <scope>TISSUE SPECIFICITY</scope>
    <scope>MASS SPECTROMETRY</scope>
    <source>
        <tissue>Venom</tissue>
    </source>
</reference>
<feature type="signal peptide" evidence="2">
    <location>
        <begin position="1"/>
        <end position="17"/>
    </location>
</feature>
<feature type="propeptide" id="PRO_0000035495">
    <location>
        <begin position="18"/>
        <end position="34"/>
    </location>
</feature>
<feature type="chain" id="PRO_0000035496" description="U2-ctenitoxin-Pn1a">
    <location>
        <begin position="35"/>
        <end position="87"/>
    </location>
</feature>
<feature type="propeptide" id="PRO_0000035497">
    <location>
        <position position="88"/>
    </location>
</feature>
<feature type="disulfide bond" evidence="4">
    <location>
        <begin position="37"/>
        <end position="51"/>
    </location>
</feature>
<feature type="disulfide bond" evidence="4">
    <location>
        <begin position="44"/>
        <end position="57"/>
    </location>
</feature>
<feature type="disulfide bond" evidence="4">
    <location>
        <begin position="48"/>
        <end position="86"/>
    </location>
</feature>
<feature type="disulfide bond" evidence="4">
    <location>
        <begin position="50"/>
        <end position="71"/>
    </location>
</feature>
<feature type="disulfide bond" evidence="4">
    <location>
        <begin position="59"/>
        <end position="69"/>
    </location>
</feature>
<protein>
    <recommendedName>
        <fullName>U2-ctenitoxin-Pn1a</fullName>
        <shortName>U2-CNTX-Pn1a</shortName>
    </recommendedName>
    <alternativeName>
        <fullName>Neurotoxin Tx2-1</fullName>
    </alternativeName>
</protein>
<organism>
    <name type="scientific">Phoneutria nigriventer</name>
    <name type="common">Brazilian armed spider</name>
    <name type="synonym">Ctenus nigriventer</name>
    <dbReference type="NCBI Taxonomy" id="6918"/>
    <lineage>
        <taxon>Eukaryota</taxon>
        <taxon>Metazoa</taxon>
        <taxon>Ecdysozoa</taxon>
        <taxon>Arthropoda</taxon>
        <taxon>Chelicerata</taxon>
        <taxon>Arachnida</taxon>
        <taxon>Araneae</taxon>
        <taxon>Araneomorphae</taxon>
        <taxon>Entelegynae</taxon>
        <taxon>Lycosoidea</taxon>
        <taxon>Ctenidae</taxon>
        <taxon>Phoneutria</taxon>
    </lineage>
</organism>
<comment type="function">
    <text evidence="1">Inhibits voltage-gated sodium channels (Nav) (By similarity). Causes scratching, lacrimation, hypersalivation, sweating and agitation followed by spastic paralysis of the anterior and posterior extremities and death at dose levels of 1.62 mg/mouse. Insecticidal to the larval and adult forms of the house fly.</text>
</comment>
<comment type="subcellular location">
    <subcellularLocation>
        <location evidence="3">Secreted</location>
    </subcellularLocation>
</comment>
<comment type="tissue specificity">
    <text evidence="3">Expressed by the venom gland.</text>
</comment>
<comment type="domain">
    <text evidence="4">The presence of a 'disulfide through disulfide knot' structurally defines this protein as a knottin.</text>
</comment>
<comment type="mass spectrometry" mass="5838.8" method="Unknown" evidence="3"/>
<comment type="similarity">
    <text evidence="4">Belongs to the neurotoxin 03 (Tx2) family. 04 subfamily.</text>
</comment>
<keyword id="KW-0903">Direct protein sequencing</keyword>
<keyword id="KW-1015">Disulfide bond</keyword>
<keyword id="KW-0872">Ion channel impairing toxin</keyword>
<keyword id="KW-0960">Knottin</keyword>
<keyword id="KW-0528">Neurotoxin</keyword>
<keyword id="KW-0964">Secreted</keyword>
<keyword id="KW-0732">Signal</keyword>
<keyword id="KW-0800">Toxin</keyword>
<keyword id="KW-0738">Voltage-gated sodium channel impairing toxin</keyword>